<protein>
    <recommendedName>
        <fullName evidence="1">Ketol-acid reductoisomerase (NADP(+))</fullName>
        <shortName evidence="1">KARI</shortName>
        <ecNumber evidence="1">1.1.1.86</ecNumber>
    </recommendedName>
    <alternativeName>
        <fullName evidence="1">Acetohydroxy-acid isomeroreductase</fullName>
        <shortName evidence="1">AHIR</shortName>
    </alternativeName>
    <alternativeName>
        <fullName evidence="1">Alpha-keto-beta-hydroxylacyl reductoisomerase</fullName>
    </alternativeName>
    <alternativeName>
        <fullName evidence="1">Ketol-acid reductoisomerase type 1</fullName>
    </alternativeName>
    <alternativeName>
        <fullName evidence="1">Ketol-acid reductoisomerase type I</fullName>
    </alternativeName>
</protein>
<sequence length="338" mass="36370">MKVFYDKDCDLSIIQGKKVAIIGYGSQGHAQACNLKDSGVDVTVGLRKGSATVAKAEAHGLKVADVATAVAAADLVMILTPDEFQGALYKNEIEPNIKKGATLAFSHGFSIHYNQVVPRADLDVIMIAPKAPGHTVRSEFVKGGGIPDLIAIYQDASGNAKNVALSYASGVGGGRTGIIETTFKDETETDLFGEQAVLCGGTVELVKAGFETLVEAGYAPEMAYFECLHELKLIVDLMYEGGIANMNYSISNNAEYGEYVTGPEVINEESRKAMRNALKRIQDGEYAKMFISEGATNYPSMTAKRRNNAAHGIEIIGEQLRSMMPWISANKIVDKTKN</sequence>
<reference key="1">
    <citation type="submission" date="2007-05" db="EMBL/GenBank/DDBJ databases">
        <title>Complete sequence of Pseudomonas putida F1.</title>
        <authorList>
            <consortium name="US DOE Joint Genome Institute"/>
            <person name="Copeland A."/>
            <person name="Lucas S."/>
            <person name="Lapidus A."/>
            <person name="Barry K."/>
            <person name="Detter J.C."/>
            <person name="Glavina del Rio T."/>
            <person name="Hammon N."/>
            <person name="Israni S."/>
            <person name="Dalin E."/>
            <person name="Tice H."/>
            <person name="Pitluck S."/>
            <person name="Chain P."/>
            <person name="Malfatti S."/>
            <person name="Shin M."/>
            <person name="Vergez L."/>
            <person name="Schmutz J."/>
            <person name="Larimer F."/>
            <person name="Land M."/>
            <person name="Hauser L."/>
            <person name="Kyrpides N."/>
            <person name="Lykidis A."/>
            <person name="Parales R."/>
            <person name="Richardson P."/>
        </authorList>
    </citation>
    <scope>NUCLEOTIDE SEQUENCE [LARGE SCALE GENOMIC DNA]</scope>
    <source>
        <strain>ATCC 700007 / DSM 6899 / JCM 31910 / BCRC 17059 / LMG 24140 / F1</strain>
    </source>
</reference>
<evidence type="ECO:0000255" key="1">
    <source>
        <dbReference type="HAMAP-Rule" id="MF_00435"/>
    </source>
</evidence>
<evidence type="ECO:0000255" key="2">
    <source>
        <dbReference type="PROSITE-ProRule" id="PRU01197"/>
    </source>
</evidence>
<evidence type="ECO:0000255" key="3">
    <source>
        <dbReference type="PROSITE-ProRule" id="PRU01198"/>
    </source>
</evidence>
<name>ILVC_PSEP1</name>
<comment type="function">
    <text evidence="1">Involved in the biosynthesis of branched-chain amino acids (BCAA). Catalyzes an alkyl-migration followed by a ketol-acid reduction of (S)-2-acetolactate (S2AL) to yield (R)-2,3-dihydroxy-isovalerate. In the isomerase reaction, S2AL is rearranged via a Mg-dependent methyl migration to produce 3-hydroxy-3-methyl-2-ketobutyrate (HMKB). In the reductase reaction, this 2-ketoacid undergoes a metal-dependent reduction by NADPH to yield (R)-2,3-dihydroxy-isovalerate.</text>
</comment>
<comment type="catalytic activity">
    <reaction evidence="1">
        <text>(2R)-2,3-dihydroxy-3-methylbutanoate + NADP(+) = (2S)-2-acetolactate + NADPH + H(+)</text>
        <dbReference type="Rhea" id="RHEA:22068"/>
        <dbReference type="ChEBI" id="CHEBI:15378"/>
        <dbReference type="ChEBI" id="CHEBI:49072"/>
        <dbReference type="ChEBI" id="CHEBI:57783"/>
        <dbReference type="ChEBI" id="CHEBI:58349"/>
        <dbReference type="ChEBI" id="CHEBI:58476"/>
        <dbReference type="EC" id="1.1.1.86"/>
    </reaction>
</comment>
<comment type="catalytic activity">
    <reaction evidence="1">
        <text>(2R,3R)-2,3-dihydroxy-3-methylpentanoate + NADP(+) = (S)-2-ethyl-2-hydroxy-3-oxobutanoate + NADPH + H(+)</text>
        <dbReference type="Rhea" id="RHEA:13493"/>
        <dbReference type="ChEBI" id="CHEBI:15378"/>
        <dbReference type="ChEBI" id="CHEBI:49256"/>
        <dbReference type="ChEBI" id="CHEBI:49258"/>
        <dbReference type="ChEBI" id="CHEBI:57783"/>
        <dbReference type="ChEBI" id="CHEBI:58349"/>
        <dbReference type="EC" id="1.1.1.86"/>
    </reaction>
</comment>
<comment type="cofactor">
    <cofactor evidence="1">
        <name>Mg(2+)</name>
        <dbReference type="ChEBI" id="CHEBI:18420"/>
    </cofactor>
    <text evidence="1">Binds 2 magnesium ions per subunit.</text>
</comment>
<comment type="pathway">
    <text evidence="1">Amino-acid biosynthesis; L-isoleucine biosynthesis; L-isoleucine from 2-oxobutanoate: step 2/4.</text>
</comment>
<comment type="pathway">
    <text evidence="1">Amino-acid biosynthesis; L-valine biosynthesis; L-valine from pyruvate: step 2/4.</text>
</comment>
<comment type="similarity">
    <text evidence="1">Belongs to the ketol-acid reductoisomerase family.</text>
</comment>
<dbReference type="EC" id="1.1.1.86" evidence="1"/>
<dbReference type="EMBL" id="CP000712">
    <property type="protein sequence ID" value="ABQ80662.1"/>
    <property type="molecule type" value="Genomic_DNA"/>
</dbReference>
<dbReference type="SMR" id="A5W952"/>
<dbReference type="KEGG" id="ppf:Pput_4542"/>
<dbReference type="eggNOG" id="COG0059">
    <property type="taxonomic scope" value="Bacteria"/>
</dbReference>
<dbReference type="HOGENOM" id="CLU_033821_0_1_6"/>
<dbReference type="UniPathway" id="UPA00047">
    <property type="reaction ID" value="UER00056"/>
</dbReference>
<dbReference type="UniPathway" id="UPA00049">
    <property type="reaction ID" value="UER00060"/>
</dbReference>
<dbReference type="GO" id="GO:0005829">
    <property type="term" value="C:cytosol"/>
    <property type="evidence" value="ECO:0007669"/>
    <property type="project" value="TreeGrafter"/>
</dbReference>
<dbReference type="GO" id="GO:0004455">
    <property type="term" value="F:ketol-acid reductoisomerase activity"/>
    <property type="evidence" value="ECO:0007669"/>
    <property type="project" value="UniProtKB-UniRule"/>
</dbReference>
<dbReference type="GO" id="GO:0000287">
    <property type="term" value="F:magnesium ion binding"/>
    <property type="evidence" value="ECO:0007669"/>
    <property type="project" value="UniProtKB-UniRule"/>
</dbReference>
<dbReference type="GO" id="GO:0050661">
    <property type="term" value="F:NADP binding"/>
    <property type="evidence" value="ECO:0007669"/>
    <property type="project" value="InterPro"/>
</dbReference>
<dbReference type="GO" id="GO:0009097">
    <property type="term" value="P:isoleucine biosynthetic process"/>
    <property type="evidence" value="ECO:0007669"/>
    <property type="project" value="UniProtKB-UniRule"/>
</dbReference>
<dbReference type="GO" id="GO:0009099">
    <property type="term" value="P:L-valine biosynthetic process"/>
    <property type="evidence" value="ECO:0007669"/>
    <property type="project" value="UniProtKB-UniRule"/>
</dbReference>
<dbReference type="FunFam" id="3.40.50.720:FF:000023">
    <property type="entry name" value="Ketol-acid reductoisomerase (NADP(+))"/>
    <property type="match status" value="1"/>
</dbReference>
<dbReference type="Gene3D" id="6.10.240.10">
    <property type="match status" value="1"/>
</dbReference>
<dbReference type="Gene3D" id="3.40.50.720">
    <property type="entry name" value="NAD(P)-binding Rossmann-like Domain"/>
    <property type="match status" value="1"/>
</dbReference>
<dbReference type="HAMAP" id="MF_00435">
    <property type="entry name" value="IlvC"/>
    <property type="match status" value="1"/>
</dbReference>
<dbReference type="InterPro" id="IPR008927">
    <property type="entry name" value="6-PGluconate_DH-like_C_sf"/>
</dbReference>
<dbReference type="InterPro" id="IPR013023">
    <property type="entry name" value="KARI"/>
</dbReference>
<dbReference type="InterPro" id="IPR000506">
    <property type="entry name" value="KARI_C"/>
</dbReference>
<dbReference type="InterPro" id="IPR013116">
    <property type="entry name" value="KARI_N"/>
</dbReference>
<dbReference type="InterPro" id="IPR014359">
    <property type="entry name" value="KARI_prok"/>
</dbReference>
<dbReference type="InterPro" id="IPR036291">
    <property type="entry name" value="NAD(P)-bd_dom_sf"/>
</dbReference>
<dbReference type="NCBIfam" id="TIGR00465">
    <property type="entry name" value="ilvC"/>
    <property type="match status" value="1"/>
</dbReference>
<dbReference type="NCBIfam" id="NF004017">
    <property type="entry name" value="PRK05479.1"/>
    <property type="match status" value="1"/>
</dbReference>
<dbReference type="NCBIfam" id="NF009940">
    <property type="entry name" value="PRK13403.1"/>
    <property type="match status" value="1"/>
</dbReference>
<dbReference type="PANTHER" id="PTHR21371">
    <property type="entry name" value="KETOL-ACID REDUCTOISOMERASE, MITOCHONDRIAL"/>
    <property type="match status" value="1"/>
</dbReference>
<dbReference type="PANTHER" id="PTHR21371:SF1">
    <property type="entry name" value="KETOL-ACID REDUCTOISOMERASE, MITOCHONDRIAL"/>
    <property type="match status" value="1"/>
</dbReference>
<dbReference type="Pfam" id="PF01450">
    <property type="entry name" value="KARI_C"/>
    <property type="match status" value="1"/>
</dbReference>
<dbReference type="Pfam" id="PF07991">
    <property type="entry name" value="KARI_N"/>
    <property type="match status" value="1"/>
</dbReference>
<dbReference type="PIRSF" id="PIRSF000116">
    <property type="entry name" value="IlvC_gammaproteo"/>
    <property type="match status" value="1"/>
</dbReference>
<dbReference type="SUPFAM" id="SSF48179">
    <property type="entry name" value="6-phosphogluconate dehydrogenase C-terminal domain-like"/>
    <property type="match status" value="1"/>
</dbReference>
<dbReference type="SUPFAM" id="SSF51735">
    <property type="entry name" value="NAD(P)-binding Rossmann-fold domains"/>
    <property type="match status" value="1"/>
</dbReference>
<dbReference type="PROSITE" id="PS51851">
    <property type="entry name" value="KARI_C"/>
    <property type="match status" value="1"/>
</dbReference>
<dbReference type="PROSITE" id="PS51850">
    <property type="entry name" value="KARI_N"/>
    <property type="match status" value="1"/>
</dbReference>
<feature type="chain" id="PRO_1000050562" description="Ketol-acid reductoisomerase (NADP(+))">
    <location>
        <begin position="1"/>
        <end position="338"/>
    </location>
</feature>
<feature type="domain" description="KARI N-terminal Rossmann" evidence="2">
    <location>
        <begin position="1"/>
        <end position="181"/>
    </location>
</feature>
<feature type="domain" description="KARI C-terminal knotted" evidence="3">
    <location>
        <begin position="182"/>
        <end position="327"/>
    </location>
</feature>
<feature type="active site" evidence="1">
    <location>
        <position position="107"/>
    </location>
</feature>
<feature type="binding site" evidence="1">
    <location>
        <begin position="24"/>
        <end position="27"/>
    </location>
    <ligand>
        <name>NADP(+)</name>
        <dbReference type="ChEBI" id="CHEBI:58349"/>
    </ligand>
</feature>
<feature type="binding site" evidence="1">
    <location>
        <position position="47"/>
    </location>
    <ligand>
        <name>NADP(+)</name>
        <dbReference type="ChEBI" id="CHEBI:58349"/>
    </ligand>
</feature>
<feature type="binding site" evidence="1">
    <location>
        <position position="50"/>
    </location>
    <ligand>
        <name>NADP(+)</name>
        <dbReference type="ChEBI" id="CHEBI:58349"/>
    </ligand>
</feature>
<feature type="binding site" evidence="1">
    <location>
        <position position="52"/>
    </location>
    <ligand>
        <name>NADP(+)</name>
        <dbReference type="ChEBI" id="CHEBI:58349"/>
    </ligand>
</feature>
<feature type="binding site" evidence="1">
    <location>
        <begin position="82"/>
        <end position="85"/>
    </location>
    <ligand>
        <name>NADP(+)</name>
        <dbReference type="ChEBI" id="CHEBI:58349"/>
    </ligand>
</feature>
<feature type="binding site" evidence="1">
    <location>
        <position position="133"/>
    </location>
    <ligand>
        <name>NADP(+)</name>
        <dbReference type="ChEBI" id="CHEBI:58349"/>
    </ligand>
</feature>
<feature type="binding site" evidence="1">
    <location>
        <position position="190"/>
    </location>
    <ligand>
        <name>Mg(2+)</name>
        <dbReference type="ChEBI" id="CHEBI:18420"/>
        <label>1</label>
    </ligand>
</feature>
<feature type="binding site" evidence="1">
    <location>
        <position position="190"/>
    </location>
    <ligand>
        <name>Mg(2+)</name>
        <dbReference type="ChEBI" id="CHEBI:18420"/>
        <label>2</label>
    </ligand>
</feature>
<feature type="binding site" evidence="1">
    <location>
        <position position="194"/>
    </location>
    <ligand>
        <name>Mg(2+)</name>
        <dbReference type="ChEBI" id="CHEBI:18420"/>
        <label>1</label>
    </ligand>
</feature>
<feature type="binding site" evidence="1">
    <location>
        <position position="226"/>
    </location>
    <ligand>
        <name>Mg(2+)</name>
        <dbReference type="ChEBI" id="CHEBI:18420"/>
        <label>2</label>
    </ligand>
</feature>
<feature type="binding site" evidence="1">
    <location>
        <position position="230"/>
    </location>
    <ligand>
        <name>Mg(2+)</name>
        <dbReference type="ChEBI" id="CHEBI:18420"/>
        <label>2</label>
    </ligand>
</feature>
<feature type="binding site" evidence="1">
    <location>
        <position position="251"/>
    </location>
    <ligand>
        <name>substrate</name>
    </ligand>
</feature>
<accession>A5W952</accession>
<organism>
    <name type="scientific">Pseudomonas putida (strain ATCC 700007 / DSM 6899 / JCM 31910 / BCRC 17059 / LMG 24140 / F1)</name>
    <dbReference type="NCBI Taxonomy" id="351746"/>
    <lineage>
        <taxon>Bacteria</taxon>
        <taxon>Pseudomonadati</taxon>
        <taxon>Pseudomonadota</taxon>
        <taxon>Gammaproteobacteria</taxon>
        <taxon>Pseudomonadales</taxon>
        <taxon>Pseudomonadaceae</taxon>
        <taxon>Pseudomonas</taxon>
    </lineage>
</organism>
<keyword id="KW-0028">Amino-acid biosynthesis</keyword>
<keyword id="KW-0100">Branched-chain amino acid biosynthesis</keyword>
<keyword id="KW-0460">Magnesium</keyword>
<keyword id="KW-0479">Metal-binding</keyword>
<keyword id="KW-0521">NADP</keyword>
<keyword id="KW-0560">Oxidoreductase</keyword>
<gene>
    <name evidence="1" type="primary">ilvC</name>
    <name type="ordered locus">Pput_4542</name>
</gene>
<proteinExistence type="inferred from homology"/>